<protein>
    <recommendedName>
        <fullName evidence="2">Photosystem II CP43 reaction center protein</fullName>
    </recommendedName>
    <alternativeName>
        <fullName evidence="2">PSII 43 kDa protein</fullName>
    </alternativeName>
    <alternativeName>
        <fullName evidence="2">Protein CP-43</fullName>
    </alternativeName>
</protein>
<keyword id="KW-0007">Acetylation</keyword>
<keyword id="KW-0148">Chlorophyll</keyword>
<keyword id="KW-0150">Chloroplast</keyword>
<keyword id="KW-0157">Chromophore</keyword>
<keyword id="KW-0464">Manganese</keyword>
<keyword id="KW-0472">Membrane</keyword>
<keyword id="KW-0479">Metal-binding</keyword>
<keyword id="KW-0597">Phosphoprotein</keyword>
<keyword id="KW-0602">Photosynthesis</keyword>
<keyword id="KW-0604">Photosystem II</keyword>
<keyword id="KW-0934">Plastid</keyword>
<keyword id="KW-0793">Thylakoid</keyword>
<keyword id="KW-0812">Transmembrane</keyword>
<keyword id="KW-1133">Transmembrane helix</keyword>
<evidence type="ECO:0000250" key="1">
    <source>
        <dbReference type="UniProtKB" id="P56778"/>
    </source>
</evidence>
<evidence type="ECO:0000255" key="2">
    <source>
        <dbReference type="HAMAP-Rule" id="MF_01496"/>
    </source>
</evidence>
<comment type="function">
    <text evidence="2">One of the components of the core complex of photosystem II (PSII). It binds chlorophyll and helps catalyze the primary light-induced photochemical processes of PSII. PSII is a light-driven water:plastoquinone oxidoreductase, using light energy to abstract electrons from H(2)O, generating O(2) and a proton gradient subsequently used for ATP formation.</text>
</comment>
<comment type="cofactor">
    <text evidence="2">Binds multiple chlorophylls and provides some of the ligands for the Ca-4Mn-5O cluster of the oxygen-evolving complex. It may also provide a ligand for a Cl- that is required for oxygen evolution. PSII binds additional chlorophylls, carotenoids and specific lipids.</text>
</comment>
<comment type="subunit">
    <text evidence="2">PSII is composed of 1 copy each of membrane proteins PsbA, PsbB, PsbC, PsbD, PsbE, PsbF, PsbH, PsbI, PsbJ, PsbK, PsbL, PsbM, PsbT, PsbX, PsbY, PsbZ, Psb30/Ycf12, at least 3 peripheral proteins of the oxygen-evolving complex and a large number of cofactors. It forms dimeric complexes.</text>
</comment>
<comment type="subcellular location">
    <subcellularLocation>
        <location evidence="2">Plastid</location>
        <location evidence="2">Chloroplast thylakoid membrane</location>
        <topology evidence="2">Multi-pass membrane protein</topology>
    </subcellularLocation>
</comment>
<comment type="similarity">
    <text evidence="2">Belongs to the PsbB/PsbC family. PsbC subfamily.</text>
</comment>
<name>PSBC_DRANE</name>
<gene>
    <name evidence="2" type="primary">psbC</name>
</gene>
<accession>A4QL15</accession>
<organism>
    <name type="scientific">Draba nemorosa</name>
    <name type="common">Woodland whitlowgrass</name>
    <dbReference type="NCBI Taxonomy" id="171822"/>
    <lineage>
        <taxon>Eukaryota</taxon>
        <taxon>Viridiplantae</taxon>
        <taxon>Streptophyta</taxon>
        <taxon>Embryophyta</taxon>
        <taxon>Tracheophyta</taxon>
        <taxon>Spermatophyta</taxon>
        <taxon>Magnoliopsida</taxon>
        <taxon>eudicotyledons</taxon>
        <taxon>Gunneridae</taxon>
        <taxon>Pentapetalae</taxon>
        <taxon>rosids</taxon>
        <taxon>malvids</taxon>
        <taxon>Brassicales</taxon>
        <taxon>Brassicaceae</taxon>
        <taxon>Arabideae</taxon>
        <taxon>Draba</taxon>
    </lineage>
</organism>
<reference key="1">
    <citation type="submission" date="2007-03" db="EMBL/GenBank/DDBJ databases">
        <title>Sequencing analysis of Draba nemoroza chloroplast DNA.</title>
        <authorList>
            <person name="Hosouchi T."/>
            <person name="Tsuruoka H."/>
            <person name="Kotani H."/>
        </authorList>
    </citation>
    <scope>NUCLEOTIDE SEQUENCE [LARGE SCALE GENOMIC DNA]</scope>
</reference>
<feature type="propeptide" id="PRO_0000431141" evidence="2">
    <location>
        <begin position="1"/>
        <end position="14"/>
    </location>
</feature>
<feature type="chain" id="PRO_0000361376" description="Photosystem II CP43 reaction center protein" evidence="2">
    <location>
        <begin position="15"/>
        <end position="473"/>
    </location>
</feature>
<feature type="transmembrane region" description="Helical" evidence="2">
    <location>
        <begin position="69"/>
        <end position="93"/>
    </location>
</feature>
<feature type="transmembrane region" description="Helical" evidence="2">
    <location>
        <begin position="134"/>
        <end position="155"/>
    </location>
</feature>
<feature type="transmembrane region" description="Helical" evidence="2">
    <location>
        <begin position="178"/>
        <end position="200"/>
    </location>
</feature>
<feature type="transmembrane region" description="Helical" evidence="2">
    <location>
        <begin position="255"/>
        <end position="275"/>
    </location>
</feature>
<feature type="transmembrane region" description="Helical" evidence="2">
    <location>
        <begin position="291"/>
        <end position="312"/>
    </location>
</feature>
<feature type="transmembrane region" description="Helical" evidence="2">
    <location>
        <begin position="447"/>
        <end position="471"/>
    </location>
</feature>
<feature type="binding site" evidence="2">
    <location>
        <position position="367"/>
    </location>
    <ligand>
        <name>[CaMn4O5] cluster</name>
        <dbReference type="ChEBI" id="CHEBI:189552"/>
    </ligand>
</feature>
<feature type="modified residue" description="N-acetylthreonine" evidence="1 2">
    <location>
        <position position="15"/>
    </location>
</feature>
<feature type="modified residue" description="Phosphothreonine" evidence="1 2">
    <location>
        <position position="15"/>
    </location>
</feature>
<sequence>MKTLYSLRRFYHVETLFNGTLALAGRDQETTGFAWWAGNARLINLSGKLLGAHVAHAGLIVFWAGAMNLFEVAHFVPEKPMYEQGLILLPHLATLGWGVGPGGEVIDTFPYFVSGVLHLISSAVLGFGGIYHALLGPETLEESFPFFGYVWKDRNKMTTILGIHLILLGVGAFLLVFKALYFGGVYDTWAPGGGDVRKITNLTLSPSVIFGYLLKSPFGGEGWIVSVDDLEDIIGGHVWLGSICIFGGIWHILTKPFAWARRALVWSGEAYLSYSLAALSVCGFIACCFVWFNNTAYPSEFYGPTGPEASQAQAFTFLVRDQRLGANVGSAQGPTGLGKYLMRSPTGEVIFGGETMRFWDLRAPWLEPLRGPNGLDLSRLKKDIQPWQERRSAEYMTHAPLGSLNSVGGVATEINAVNYVSPRSWLSTSHFVLGFFLFVGHLWHAGRARAAAAGFEKGIDRDFEPVLSMTPLN</sequence>
<proteinExistence type="inferred from homology"/>
<dbReference type="EMBL" id="AP009373">
    <property type="protein sequence ID" value="BAF50370.1"/>
    <property type="molecule type" value="Genomic_DNA"/>
</dbReference>
<dbReference type="RefSeq" id="YP_001123546.1">
    <property type="nucleotide sequence ID" value="NC_009272.1"/>
</dbReference>
<dbReference type="SMR" id="A4QL15"/>
<dbReference type="GeneID" id="4964740"/>
<dbReference type="GO" id="GO:0009535">
    <property type="term" value="C:chloroplast thylakoid membrane"/>
    <property type="evidence" value="ECO:0007669"/>
    <property type="project" value="UniProtKB-SubCell"/>
</dbReference>
<dbReference type="GO" id="GO:0009523">
    <property type="term" value="C:photosystem II"/>
    <property type="evidence" value="ECO:0007669"/>
    <property type="project" value="UniProtKB-KW"/>
</dbReference>
<dbReference type="GO" id="GO:0016168">
    <property type="term" value="F:chlorophyll binding"/>
    <property type="evidence" value="ECO:0007669"/>
    <property type="project" value="UniProtKB-UniRule"/>
</dbReference>
<dbReference type="GO" id="GO:0045156">
    <property type="term" value="F:electron transporter, transferring electrons within the cyclic electron transport pathway of photosynthesis activity"/>
    <property type="evidence" value="ECO:0007669"/>
    <property type="project" value="InterPro"/>
</dbReference>
<dbReference type="GO" id="GO:0046872">
    <property type="term" value="F:metal ion binding"/>
    <property type="evidence" value="ECO:0007669"/>
    <property type="project" value="UniProtKB-KW"/>
</dbReference>
<dbReference type="GO" id="GO:0009772">
    <property type="term" value="P:photosynthetic electron transport in photosystem II"/>
    <property type="evidence" value="ECO:0007669"/>
    <property type="project" value="InterPro"/>
</dbReference>
<dbReference type="FunFam" id="1.10.10.670:FF:000001">
    <property type="entry name" value="Photosystem II CP43 reaction center protein"/>
    <property type="match status" value="1"/>
</dbReference>
<dbReference type="Gene3D" id="1.10.10.670">
    <property type="entry name" value="photosystem ii from thermosynechococcus elongatus"/>
    <property type="match status" value="1"/>
</dbReference>
<dbReference type="HAMAP" id="MF_01496">
    <property type="entry name" value="PSII_PsbC_CP43"/>
    <property type="match status" value="1"/>
</dbReference>
<dbReference type="InterPro" id="IPR000932">
    <property type="entry name" value="PS_antenna-like"/>
</dbReference>
<dbReference type="InterPro" id="IPR036001">
    <property type="entry name" value="PS_II_antenna-like_sf"/>
</dbReference>
<dbReference type="InterPro" id="IPR005869">
    <property type="entry name" value="PSII_PsbC"/>
</dbReference>
<dbReference type="InterPro" id="IPR044900">
    <property type="entry name" value="PSII_PsbC_sf"/>
</dbReference>
<dbReference type="NCBIfam" id="TIGR01153">
    <property type="entry name" value="psbC"/>
    <property type="match status" value="1"/>
</dbReference>
<dbReference type="Pfam" id="PF00421">
    <property type="entry name" value="PSII"/>
    <property type="match status" value="1"/>
</dbReference>
<dbReference type="SUPFAM" id="SSF161077">
    <property type="entry name" value="Photosystem II antenna protein-like"/>
    <property type="match status" value="1"/>
</dbReference>
<geneLocation type="chloroplast"/>